<organism>
    <name type="scientific">Arabidopsis thaliana</name>
    <name type="common">Mouse-ear cress</name>
    <dbReference type="NCBI Taxonomy" id="3702"/>
    <lineage>
        <taxon>Eukaryota</taxon>
        <taxon>Viridiplantae</taxon>
        <taxon>Streptophyta</taxon>
        <taxon>Embryophyta</taxon>
        <taxon>Tracheophyta</taxon>
        <taxon>Spermatophyta</taxon>
        <taxon>Magnoliopsida</taxon>
        <taxon>eudicotyledons</taxon>
        <taxon>Gunneridae</taxon>
        <taxon>Pentapetalae</taxon>
        <taxon>rosids</taxon>
        <taxon>malvids</taxon>
        <taxon>Brassicales</taxon>
        <taxon>Brassicaceae</taxon>
        <taxon>Camelineae</taxon>
        <taxon>Arabidopsis</taxon>
    </lineage>
</organism>
<dbReference type="EMBL" id="AC003981">
    <property type="protein sequence ID" value="AAF99776.1"/>
    <property type="molecule type" value="Genomic_DNA"/>
</dbReference>
<dbReference type="EMBL" id="CP002684">
    <property type="protein sequence ID" value="AEE28336.1"/>
    <property type="molecule type" value="Genomic_DNA"/>
</dbReference>
<dbReference type="EMBL" id="AY058880">
    <property type="protein sequence ID" value="AAL24266.1"/>
    <property type="molecule type" value="mRNA"/>
</dbReference>
<dbReference type="EMBL" id="AY088208">
    <property type="protein sequence ID" value="AAM65750.1"/>
    <property type="molecule type" value="mRNA"/>
</dbReference>
<dbReference type="PIR" id="T00724">
    <property type="entry name" value="T00724"/>
</dbReference>
<dbReference type="RefSeq" id="NP_172346.1">
    <property type="nucleotide sequence ID" value="NM_100743.4"/>
</dbReference>
<dbReference type="SMR" id="O64668"/>
<dbReference type="BioGRID" id="22632">
    <property type="interactions" value="3"/>
</dbReference>
<dbReference type="FunCoup" id="O64668">
    <property type="interactions" value="3476"/>
</dbReference>
<dbReference type="IntAct" id="O64668">
    <property type="interactions" value="1"/>
</dbReference>
<dbReference type="STRING" id="3702.O64668"/>
<dbReference type="MEROPS" id="A22.A01"/>
<dbReference type="iPTMnet" id="O64668"/>
<dbReference type="PaxDb" id="3702-AT1G08700.1"/>
<dbReference type="ProteomicsDB" id="248758"/>
<dbReference type="EnsemblPlants" id="AT1G08700.1">
    <property type="protein sequence ID" value="AT1G08700.1"/>
    <property type="gene ID" value="AT1G08700"/>
</dbReference>
<dbReference type="GeneID" id="837391"/>
<dbReference type="Gramene" id="AT1G08700.1">
    <property type="protein sequence ID" value="AT1G08700.1"/>
    <property type="gene ID" value="AT1G08700"/>
</dbReference>
<dbReference type="KEGG" id="ath:AT1G08700"/>
<dbReference type="Araport" id="AT1G08700"/>
<dbReference type="TAIR" id="AT1G08700">
    <property type="gene designation" value="PS1"/>
</dbReference>
<dbReference type="eggNOG" id="KOG2736">
    <property type="taxonomic scope" value="Eukaryota"/>
</dbReference>
<dbReference type="HOGENOM" id="CLU_022975_2_0_1"/>
<dbReference type="InParanoid" id="O64668"/>
<dbReference type="OMA" id="TTNLMMF"/>
<dbReference type="OrthoDB" id="20287at2759"/>
<dbReference type="PhylomeDB" id="O64668"/>
<dbReference type="PRO" id="PR:O64668"/>
<dbReference type="Proteomes" id="UP000006548">
    <property type="component" value="Chromosome 1"/>
</dbReference>
<dbReference type="ExpressionAtlas" id="O64668">
    <property type="expression patterns" value="baseline and differential"/>
</dbReference>
<dbReference type="GO" id="GO:0005789">
    <property type="term" value="C:endoplasmic reticulum membrane"/>
    <property type="evidence" value="ECO:0007669"/>
    <property type="project" value="UniProtKB-SubCell"/>
</dbReference>
<dbReference type="GO" id="GO:0000139">
    <property type="term" value="C:Golgi membrane"/>
    <property type="evidence" value="ECO:0007669"/>
    <property type="project" value="UniProtKB-SubCell"/>
</dbReference>
<dbReference type="GO" id="GO:0005798">
    <property type="term" value="C:Golgi-associated vesicle"/>
    <property type="evidence" value="ECO:0000314"/>
    <property type="project" value="TAIR"/>
</dbReference>
<dbReference type="GO" id="GO:0043231">
    <property type="term" value="C:intracellular membrane-bounded organelle"/>
    <property type="evidence" value="ECO:0000314"/>
    <property type="project" value="TAIR"/>
</dbReference>
<dbReference type="GO" id="GO:0042500">
    <property type="term" value="F:aspartic endopeptidase activity, intramembrane cleaving"/>
    <property type="evidence" value="ECO:0007669"/>
    <property type="project" value="InterPro"/>
</dbReference>
<dbReference type="GO" id="GO:0007219">
    <property type="term" value="P:Notch signaling pathway"/>
    <property type="evidence" value="ECO:0007669"/>
    <property type="project" value="UniProtKB-KW"/>
</dbReference>
<dbReference type="GO" id="GO:0016485">
    <property type="term" value="P:protein processing"/>
    <property type="evidence" value="ECO:0007669"/>
    <property type="project" value="InterPro"/>
</dbReference>
<dbReference type="FunFam" id="1.10.472.100:FF:000002">
    <property type="entry name" value="Presenilin"/>
    <property type="match status" value="1"/>
</dbReference>
<dbReference type="Gene3D" id="1.10.472.100">
    <property type="entry name" value="Presenilin"/>
    <property type="match status" value="1"/>
</dbReference>
<dbReference type="InterPro" id="IPR001108">
    <property type="entry name" value="Peptidase_A22A"/>
</dbReference>
<dbReference type="InterPro" id="IPR006639">
    <property type="entry name" value="Preselin/SPP"/>
</dbReference>
<dbReference type="InterPro" id="IPR042524">
    <property type="entry name" value="Presenilin_C"/>
</dbReference>
<dbReference type="PANTHER" id="PTHR10202">
    <property type="entry name" value="PRESENILIN"/>
    <property type="match status" value="1"/>
</dbReference>
<dbReference type="PANTHER" id="PTHR10202:SF26">
    <property type="entry name" value="PRESENILIN"/>
    <property type="match status" value="1"/>
</dbReference>
<dbReference type="Pfam" id="PF01080">
    <property type="entry name" value="Presenilin"/>
    <property type="match status" value="1"/>
</dbReference>
<dbReference type="PRINTS" id="PR01072">
    <property type="entry name" value="PRESENILIN"/>
</dbReference>
<dbReference type="SMART" id="SM00730">
    <property type="entry name" value="PSN"/>
    <property type="match status" value="1"/>
</dbReference>
<reference key="1">
    <citation type="journal article" date="2000" name="Nature">
        <title>Sequence and analysis of chromosome 1 of the plant Arabidopsis thaliana.</title>
        <authorList>
            <person name="Theologis A."/>
            <person name="Ecker J.R."/>
            <person name="Palm C.J."/>
            <person name="Federspiel N.A."/>
            <person name="Kaul S."/>
            <person name="White O."/>
            <person name="Alonso J."/>
            <person name="Altafi H."/>
            <person name="Araujo R."/>
            <person name="Bowman C.L."/>
            <person name="Brooks S.Y."/>
            <person name="Buehler E."/>
            <person name="Chan A."/>
            <person name="Chao Q."/>
            <person name="Chen H."/>
            <person name="Cheuk R.F."/>
            <person name="Chin C.W."/>
            <person name="Chung M.K."/>
            <person name="Conn L."/>
            <person name="Conway A.B."/>
            <person name="Conway A.R."/>
            <person name="Creasy T.H."/>
            <person name="Dewar K."/>
            <person name="Dunn P."/>
            <person name="Etgu P."/>
            <person name="Feldblyum T.V."/>
            <person name="Feng J.-D."/>
            <person name="Fong B."/>
            <person name="Fujii C.Y."/>
            <person name="Gill J.E."/>
            <person name="Goldsmith A.D."/>
            <person name="Haas B."/>
            <person name="Hansen N.F."/>
            <person name="Hughes B."/>
            <person name="Huizar L."/>
            <person name="Hunter J.L."/>
            <person name="Jenkins J."/>
            <person name="Johnson-Hopson C."/>
            <person name="Khan S."/>
            <person name="Khaykin E."/>
            <person name="Kim C.J."/>
            <person name="Koo H.L."/>
            <person name="Kremenetskaia I."/>
            <person name="Kurtz D.B."/>
            <person name="Kwan A."/>
            <person name="Lam B."/>
            <person name="Langin-Hooper S."/>
            <person name="Lee A."/>
            <person name="Lee J.M."/>
            <person name="Lenz C.A."/>
            <person name="Li J.H."/>
            <person name="Li Y.-P."/>
            <person name="Lin X."/>
            <person name="Liu S.X."/>
            <person name="Liu Z.A."/>
            <person name="Luros J.S."/>
            <person name="Maiti R."/>
            <person name="Marziali A."/>
            <person name="Militscher J."/>
            <person name="Miranda M."/>
            <person name="Nguyen M."/>
            <person name="Nierman W.C."/>
            <person name="Osborne B.I."/>
            <person name="Pai G."/>
            <person name="Peterson J."/>
            <person name="Pham P.K."/>
            <person name="Rizzo M."/>
            <person name="Rooney T."/>
            <person name="Rowley D."/>
            <person name="Sakano H."/>
            <person name="Salzberg S.L."/>
            <person name="Schwartz J.R."/>
            <person name="Shinn P."/>
            <person name="Southwick A.M."/>
            <person name="Sun H."/>
            <person name="Tallon L.J."/>
            <person name="Tambunga G."/>
            <person name="Toriumi M.J."/>
            <person name="Town C.D."/>
            <person name="Utterback T."/>
            <person name="Van Aken S."/>
            <person name="Vaysberg M."/>
            <person name="Vysotskaia V.S."/>
            <person name="Walker M."/>
            <person name="Wu D."/>
            <person name="Yu G."/>
            <person name="Fraser C.M."/>
            <person name="Venter J.C."/>
            <person name="Davis R.W."/>
        </authorList>
    </citation>
    <scope>NUCLEOTIDE SEQUENCE [LARGE SCALE GENOMIC DNA]</scope>
    <source>
        <strain>cv. Columbia</strain>
    </source>
</reference>
<reference key="2">
    <citation type="journal article" date="2017" name="Plant J.">
        <title>Araport11: a complete reannotation of the Arabidopsis thaliana reference genome.</title>
        <authorList>
            <person name="Cheng C.Y."/>
            <person name="Krishnakumar V."/>
            <person name="Chan A.P."/>
            <person name="Thibaud-Nissen F."/>
            <person name="Schobel S."/>
            <person name="Town C.D."/>
        </authorList>
    </citation>
    <scope>GENOME REANNOTATION</scope>
    <source>
        <strain>cv. Columbia</strain>
    </source>
</reference>
<reference key="3">
    <citation type="journal article" date="2003" name="Science">
        <title>Empirical analysis of transcriptional activity in the Arabidopsis genome.</title>
        <authorList>
            <person name="Yamada K."/>
            <person name="Lim J."/>
            <person name="Dale J.M."/>
            <person name="Chen H."/>
            <person name="Shinn P."/>
            <person name="Palm C.J."/>
            <person name="Southwick A.M."/>
            <person name="Wu H.C."/>
            <person name="Kim C.J."/>
            <person name="Nguyen M."/>
            <person name="Pham P.K."/>
            <person name="Cheuk R.F."/>
            <person name="Karlin-Newmann G."/>
            <person name="Liu S.X."/>
            <person name="Lam B."/>
            <person name="Sakano H."/>
            <person name="Wu T."/>
            <person name="Yu G."/>
            <person name="Miranda M."/>
            <person name="Quach H.L."/>
            <person name="Tripp M."/>
            <person name="Chang C.H."/>
            <person name="Lee J.M."/>
            <person name="Toriumi M.J."/>
            <person name="Chan M.M."/>
            <person name="Tang C.C."/>
            <person name="Onodera C.S."/>
            <person name="Deng J.M."/>
            <person name="Akiyama K."/>
            <person name="Ansari Y."/>
            <person name="Arakawa T."/>
            <person name="Banh J."/>
            <person name="Banno F."/>
            <person name="Bowser L."/>
            <person name="Brooks S.Y."/>
            <person name="Carninci P."/>
            <person name="Chao Q."/>
            <person name="Choy N."/>
            <person name="Enju A."/>
            <person name="Goldsmith A.D."/>
            <person name="Gurjal M."/>
            <person name="Hansen N.F."/>
            <person name="Hayashizaki Y."/>
            <person name="Johnson-Hopson C."/>
            <person name="Hsuan V.W."/>
            <person name="Iida K."/>
            <person name="Karnes M."/>
            <person name="Khan S."/>
            <person name="Koesema E."/>
            <person name="Ishida J."/>
            <person name="Jiang P.X."/>
            <person name="Jones T."/>
            <person name="Kawai J."/>
            <person name="Kamiya A."/>
            <person name="Meyers C."/>
            <person name="Nakajima M."/>
            <person name="Narusaka M."/>
            <person name="Seki M."/>
            <person name="Sakurai T."/>
            <person name="Satou M."/>
            <person name="Tamse R."/>
            <person name="Vaysberg M."/>
            <person name="Wallender E.K."/>
            <person name="Wong C."/>
            <person name="Yamamura Y."/>
            <person name="Yuan S."/>
            <person name="Shinozaki K."/>
            <person name="Davis R.W."/>
            <person name="Theologis A."/>
            <person name="Ecker J.R."/>
        </authorList>
    </citation>
    <scope>NUCLEOTIDE SEQUENCE [LARGE SCALE MRNA]</scope>
    <source>
        <strain>cv. Columbia</strain>
    </source>
</reference>
<reference key="4">
    <citation type="submission" date="2002-03" db="EMBL/GenBank/DDBJ databases">
        <title>Full-length cDNA from Arabidopsis thaliana.</title>
        <authorList>
            <person name="Brover V.V."/>
            <person name="Troukhan M.E."/>
            <person name="Alexandrov N.A."/>
            <person name="Lu Y.-P."/>
            <person name="Flavell R.B."/>
            <person name="Feldmann K.A."/>
        </authorList>
    </citation>
    <scope>NUCLEOTIDE SEQUENCE [LARGE SCALE MRNA]</scope>
</reference>
<reference key="5">
    <citation type="journal article" date="2009" name="J. Proteomics">
        <title>Phosphoproteomic analysis of nuclei-enriched fractions from Arabidopsis thaliana.</title>
        <authorList>
            <person name="Jones A.M.E."/>
            <person name="MacLean D."/>
            <person name="Studholme D.J."/>
            <person name="Serna-Sanz A."/>
            <person name="Andreasson E."/>
            <person name="Rathjen J.P."/>
            <person name="Peck S.C."/>
        </authorList>
    </citation>
    <scope>PHOSPHORYLATION [LARGE SCALE ANALYSIS] AT SER-296</scope>
    <scope>IDENTIFICATION BY MASS SPECTROMETRY [LARGE SCALE ANALYSIS]</scope>
    <source>
        <strain>cv. Columbia</strain>
    </source>
</reference>
<gene>
    <name type="ordered locus">At1g08700</name>
    <name type="ORF">F22O13.18</name>
</gene>
<comment type="function">
    <text evidence="1">Probable subunit of the gamma-secretase complex, an endoprotease complex that catalyzes the intramembrane cleavage of integral membrane proteins such as Notch receptors.</text>
</comment>
<comment type="subunit">
    <text evidence="1">Homodimer. Probable component of the gamma-secretase complex, a complex composed of a presenilin homodimer, nicastrin, APH1 and PEN2 (By similarity).</text>
</comment>
<comment type="subcellular location">
    <subcellularLocation>
        <location evidence="1">Endoplasmic reticulum membrane</location>
        <topology evidence="1">Multi-pass membrane protein</topology>
    </subcellularLocation>
    <subcellularLocation>
        <location evidence="1">Golgi apparatus membrane</location>
        <topology evidence="1">Multi-pass membrane protein</topology>
    </subcellularLocation>
</comment>
<comment type="domain">
    <text evidence="1">The PAL motif is required for normal active site conformation.</text>
</comment>
<comment type="similarity">
    <text evidence="4">Belongs to the peptidase A22A family.</text>
</comment>
<sequence>MESSILDSLGVEIIGVMAPVSICMFLVVLLTYSLSVTSDPQIRSAANLIYIENPSDSTTVKLEGSLANAIVFVVLIAAVTFILVLLFYYNFTNFLKHYMRFSAFFVLGTMGGAIFLSIIQHFSIPVDSITCFILLFNFTILGTLSVFAGGIPIVLRQCYMVVMGIVVAAWFTKLPEWTTWFILVALALYDLVAVLAPGGPLKLLVELASSRDEELPAMVYEARPTVSSGNQRRNRGSSLRALVGGGGVSDSGSVELQAVRNHDVNQLGRENSHNMDYNAIAVRDIDNVDDGIGNGSRGGLERSPLVGSPSASEHSTSVGTRGNMEDRESVMDEEMSPLVELMGWGDNREEARGLEESDNVVDISNRGIKLGLGDFIFYSVLVGRAAMYDLMTVYACYLAIISGLGCTLILLSVYNRALPALPISIMLGVVFYFLTRLLMEPFVVGVTTNLMMF</sequence>
<feature type="chain" id="PRO_0000073905" description="Presenilin-like protein At1g08700">
    <location>
        <begin position="1"/>
        <end position="453"/>
    </location>
</feature>
<feature type="topological domain" description="Cytoplasmic" evidence="2">
    <location>
        <begin position="1"/>
        <end position="8"/>
    </location>
</feature>
<feature type="transmembrane region" description="Helical" evidence="2">
    <location>
        <begin position="9"/>
        <end position="29"/>
    </location>
</feature>
<feature type="topological domain" description="Lumenal" evidence="2">
    <location>
        <begin position="30"/>
        <end position="68"/>
    </location>
</feature>
<feature type="transmembrane region" description="Helical" evidence="2">
    <location>
        <begin position="69"/>
        <end position="89"/>
    </location>
</feature>
<feature type="topological domain" description="Cytoplasmic" evidence="2">
    <location>
        <begin position="90"/>
        <end position="103"/>
    </location>
</feature>
<feature type="transmembrane region" description="Helical" evidence="2">
    <location>
        <begin position="104"/>
        <end position="124"/>
    </location>
</feature>
<feature type="topological domain" description="Lumenal" evidence="2">
    <location>
        <begin position="125"/>
        <end position="132"/>
    </location>
</feature>
<feature type="transmembrane region" description="Helical" evidence="2">
    <location>
        <begin position="133"/>
        <end position="153"/>
    </location>
</feature>
<feature type="topological domain" description="Cytoplasmic" evidence="2">
    <location>
        <begin position="154"/>
        <end position="159"/>
    </location>
</feature>
<feature type="transmembrane region" description="Helical" evidence="2">
    <location>
        <begin position="160"/>
        <end position="180"/>
    </location>
</feature>
<feature type="transmembrane region" description="Helical" evidence="2">
    <location>
        <begin position="181"/>
        <end position="201"/>
    </location>
</feature>
<feature type="topological domain" description="Cytoplasmic" evidence="2">
    <location>
        <begin position="202"/>
        <end position="369"/>
    </location>
</feature>
<feature type="transmembrane region" description="Helical" evidence="2">
    <location>
        <begin position="370"/>
        <end position="390"/>
    </location>
</feature>
<feature type="topological domain" description="Lumenal" evidence="2">
    <location>
        <begin position="391"/>
        <end position="392"/>
    </location>
</feature>
<feature type="transmembrane region" description="Helical" evidence="2">
    <location>
        <begin position="393"/>
        <end position="413"/>
    </location>
</feature>
<feature type="topological domain" description="Cytoplasmic" evidence="2">
    <location>
        <begin position="414"/>
        <end position="417"/>
    </location>
</feature>
<feature type="intramembrane region" description="Helical" evidence="2">
    <location>
        <begin position="418"/>
        <end position="438"/>
    </location>
</feature>
<feature type="topological domain" description="Cytoplasmic" evidence="2">
    <location>
        <begin position="439"/>
        <end position="453"/>
    </location>
</feature>
<feature type="region of interest" description="Disordered" evidence="3">
    <location>
        <begin position="226"/>
        <end position="248"/>
    </location>
</feature>
<feature type="region of interest" description="Disordered" evidence="3">
    <location>
        <begin position="292"/>
        <end position="329"/>
    </location>
</feature>
<feature type="short sequence motif" description="PAL">
    <location>
        <begin position="419"/>
        <end position="421"/>
    </location>
</feature>
<feature type="compositionally biased region" description="Low complexity" evidence="3">
    <location>
        <begin position="227"/>
        <end position="240"/>
    </location>
</feature>
<feature type="compositionally biased region" description="Polar residues" evidence="3">
    <location>
        <begin position="309"/>
        <end position="320"/>
    </location>
</feature>
<feature type="active site" evidence="1">
    <location>
        <position position="190"/>
    </location>
</feature>
<feature type="active site" evidence="1">
    <location>
        <position position="374"/>
    </location>
</feature>
<feature type="modified residue" description="Phosphoserine" evidence="5">
    <location>
        <position position="296"/>
    </location>
</feature>
<feature type="sequence conflict" description="In Ref. 4; AAM65750." evidence="4" ref="4">
    <original>M</original>
    <variation>I</variation>
    <location>
        <position position="24"/>
    </location>
</feature>
<evidence type="ECO:0000250" key="1"/>
<evidence type="ECO:0000255" key="2"/>
<evidence type="ECO:0000256" key="3">
    <source>
        <dbReference type="SAM" id="MobiDB-lite"/>
    </source>
</evidence>
<evidence type="ECO:0000305" key="4"/>
<evidence type="ECO:0007744" key="5">
    <source>
    </source>
</evidence>
<name>PSNA_ARATH</name>
<keyword id="KW-0256">Endoplasmic reticulum</keyword>
<keyword id="KW-0333">Golgi apparatus</keyword>
<keyword id="KW-0472">Membrane</keyword>
<keyword id="KW-0914">Notch signaling pathway</keyword>
<keyword id="KW-0597">Phosphoprotein</keyword>
<keyword id="KW-1185">Reference proteome</keyword>
<keyword id="KW-0812">Transmembrane</keyword>
<keyword id="KW-1133">Transmembrane helix</keyword>
<protein>
    <recommendedName>
        <fullName>Presenilin-like protein At1g08700</fullName>
    </recommendedName>
</protein>
<accession>O64668</accession>
<accession>Q8L9V0</accession>
<proteinExistence type="evidence at protein level"/>